<dbReference type="EMBL" id="GL988039">
    <property type="protein sequence ID" value="EGS23095.1"/>
    <property type="molecule type" value="Genomic_DNA"/>
</dbReference>
<dbReference type="EMBL" id="JF276302">
    <property type="protein sequence ID" value="AEL00695.1"/>
    <property type="molecule type" value="Genomic_DNA"/>
</dbReference>
<dbReference type="RefSeq" id="XP_006692087.1">
    <property type="nucleotide sequence ID" value="XM_006692024.1"/>
</dbReference>
<dbReference type="STRING" id="759272.G0S235"/>
<dbReference type="TCDB" id="1.I.1.1.2">
    <property type="family name" value="the nuclear pore complex (npc) family"/>
</dbReference>
<dbReference type="GeneID" id="18255622"/>
<dbReference type="KEGG" id="cthr:CTHT_0015840"/>
<dbReference type="eggNOG" id="ENOG502S1MG">
    <property type="taxonomic scope" value="Eukaryota"/>
</dbReference>
<dbReference type="HOGENOM" id="CLU_029386_1_0_1"/>
<dbReference type="OMA" id="WQTANLF"/>
<dbReference type="OrthoDB" id="67850at2759"/>
<dbReference type="Proteomes" id="UP000008066">
    <property type="component" value="Unassembled WGS sequence"/>
</dbReference>
<dbReference type="GO" id="GO:0031965">
    <property type="term" value="C:nuclear membrane"/>
    <property type="evidence" value="ECO:0007669"/>
    <property type="project" value="UniProtKB-SubCell"/>
</dbReference>
<dbReference type="GO" id="GO:0070762">
    <property type="term" value="C:nuclear pore transmembrane ring"/>
    <property type="evidence" value="ECO:0007669"/>
    <property type="project" value="TreeGrafter"/>
</dbReference>
<dbReference type="GO" id="GO:0005816">
    <property type="term" value="C:spindle pole body"/>
    <property type="evidence" value="ECO:0007669"/>
    <property type="project" value="TreeGrafter"/>
</dbReference>
<dbReference type="GO" id="GO:0106166">
    <property type="term" value="F:spindle pole body-nuclear membrane anchor activity"/>
    <property type="evidence" value="ECO:0007669"/>
    <property type="project" value="TreeGrafter"/>
</dbReference>
<dbReference type="GO" id="GO:0051028">
    <property type="term" value="P:mRNA transport"/>
    <property type="evidence" value="ECO:0007669"/>
    <property type="project" value="UniProtKB-KW"/>
</dbReference>
<dbReference type="GO" id="GO:0006999">
    <property type="term" value="P:nuclear pore organization"/>
    <property type="evidence" value="ECO:0007669"/>
    <property type="project" value="TreeGrafter"/>
</dbReference>
<dbReference type="GO" id="GO:0015031">
    <property type="term" value="P:protein transport"/>
    <property type="evidence" value="ECO:0007669"/>
    <property type="project" value="UniProtKB-KW"/>
</dbReference>
<dbReference type="GO" id="GO:0070631">
    <property type="term" value="P:spindle pole body localization"/>
    <property type="evidence" value="ECO:0007669"/>
    <property type="project" value="TreeGrafter"/>
</dbReference>
<dbReference type="InterPro" id="IPR019049">
    <property type="entry name" value="Nucleoporin_prot_Ndc1/Nup"/>
</dbReference>
<dbReference type="PANTHER" id="PTHR13269">
    <property type="entry name" value="NUCLEOPORIN NDC1"/>
    <property type="match status" value="1"/>
</dbReference>
<dbReference type="PANTHER" id="PTHR13269:SF6">
    <property type="entry name" value="NUCLEOPORIN NDC1"/>
    <property type="match status" value="1"/>
</dbReference>
<dbReference type="Pfam" id="PF09531">
    <property type="entry name" value="Ndc1_Nup"/>
    <property type="match status" value="1"/>
</dbReference>
<comment type="function">
    <text evidence="1">Functions as a component of the nuclear pore complex (NPC) and the spindle pole body (SPB), probably by playing a key role in de novo assembly and insertion of both structures in the nuclear envelope. NPC components, collectively referred to as nucleoporins (NUPs), can play the role of both NPC structural components and of docking or interaction partners for transiently associated nuclear transport factors.</text>
</comment>
<comment type="subunit">
    <text evidence="1 6">Component of the nuclear pore complex (NPC). NPC constitutes the exclusive means of nucleocytoplasmic transport. NPCs allow the passive diffusion of ions and small molecules and the active, nuclear transport receptor-mediated bidirectional transport of macromolecules such as proteins, RNAs, ribonucleoparticles (RNPs), and ribosomal subunits across the nuclear envelope. Due to its 8-fold rotational symmetry, all subunits are present with 8 copies or multiples thereof.</text>
</comment>
<comment type="subcellular location">
    <subcellularLocation>
        <location evidence="1">Nucleus</location>
        <location evidence="1">Nuclear pore complex</location>
    </subcellularLocation>
    <subcellularLocation>
        <location>Nucleus membrane</location>
        <topology evidence="2">Multi-pass membrane protein</topology>
    </subcellularLocation>
    <text evidence="1">Central core structure of the nuclear pore complex.</text>
</comment>
<comment type="similarity">
    <text evidence="5">Belongs to the NDC1 family.</text>
</comment>
<organism>
    <name type="scientific">Chaetomium thermophilum (strain DSM 1495 / CBS 144.50 / IMI 039719)</name>
    <name type="common">Thermochaetoides thermophila</name>
    <dbReference type="NCBI Taxonomy" id="759272"/>
    <lineage>
        <taxon>Eukaryota</taxon>
        <taxon>Fungi</taxon>
        <taxon>Dikarya</taxon>
        <taxon>Ascomycota</taxon>
        <taxon>Pezizomycotina</taxon>
        <taxon>Sordariomycetes</taxon>
        <taxon>Sordariomycetidae</taxon>
        <taxon>Sordariales</taxon>
        <taxon>Chaetomiaceae</taxon>
        <taxon>Thermochaetoides</taxon>
    </lineage>
</organism>
<evidence type="ECO:0000250" key="1">
    <source>
        <dbReference type="UniProtKB" id="P32500"/>
    </source>
</evidence>
<evidence type="ECO:0000255" key="2"/>
<evidence type="ECO:0000256" key="3">
    <source>
        <dbReference type="SAM" id="MobiDB-lite"/>
    </source>
</evidence>
<evidence type="ECO:0000303" key="4">
    <source>
    </source>
</evidence>
<evidence type="ECO:0000305" key="5"/>
<evidence type="ECO:0000305" key="6">
    <source>
    </source>
</evidence>
<protein>
    <recommendedName>
        <fullName evidence="4">Nucleoporin NDC1</fullName>
    </recommendedName>
    <alternativeName>
        <fullName>Nuclear pore protein NDC1</fullName>
    </alternativeName>
</protein>
<name>NDC1_CHATD</name>
<keyword id="KW-0175">Coiled coil</keyword>
<keyword id="KW-0472">Membrane</keyword>
<keyword id="KW-0509">mRNA transport</keyword>
<keyword id="KW-0906">Nuclear pore complex</keyword>
<keyword id="KW-0539">Nucleus</keyword>
<keyword id="KW-0653">Protein transport</keyword>
<keyword id="KW-1185">Reference proteome</keyword>
<keyword id="KW-0811">Translocation</keyword>
<keyword id="KW-0812">Transmembrane</keyword>
<keyword id="KW-1133">Transmembrane helix</keyword>
<keyword id="KW-0813">Transport</keyword>
<feature type="chain" id="PRO_0000433181" description="Nucleoporin NDC1">
    <location>
        <begin position="1"/>
        <end position="646"/>
    </location>
</feature>
<feature type="topological domain" description="Cytoplasmic" evidence="1">
    <location>
        <begin position="1"/>
        <end position="20"/>
    </location>
</feature>
<feature type="transmembrane region" description="Helical" evidence="2">
    <location>
        <begin position="21"/>
        <end position="41"/>
    </location>
</feature>
<feature type="topological domain" description="Perinuclear space" evidence="1">
    <location>
        <begin position="42"/>
        <end position="52"/>
    </location>
</feature>
<feature type="transmembrane region" description="Helical" evidence="2">
    <location>
        <begin position="53"/>
        <end position="73"/>
    </location>
</feature>
<feature type="topological domain" description="Cytoplasmic" evidence="1">
    <location>
        <begin position="74"/>
        <end position="103"/>
    </location>
</feature>
<feature type="transmembrane region" description="Helical" evidence="2">
    <location>
        <begin position="104"/>
        <end position="124"/>
    </location>
</feature>
<feature type="topological domain" description="Perinuclear space" evidence="1">
    <location>
        <begin position="125"/>
        <end position="144"/>
    </location>
</feature>
<feature type="transmembrane region" description="Helical" evidence="2">
    <location>
        <begin position="145"/>
        <end position="165"/>
    </location>
</feature>
<feature type="topological domain" description="Cytoplasmic" evidence="1">
    <location>
        <begin position="166"/>
        <end position="207"/>
    </location>
</feature>
<feature type="transmembrane region" description="Helical" evidence="2">
    <location>
        <begin position="208"/>
        <end position="228"/>
    </location>
</feature>
<feature type="topological domain" description="Perinuclear space" evidence="1">
    <location>
        <begin position="229"/>
        <end position="271"/>
    </location>
</feature>
<feature type="transmembrane region" description="Helical" evidence="2">
    <location>
        <begin position="272"/>
        <end position="292"/>
    </location>
</feature>
<feature type="topological domain" description="Cytoplasmic" evidence="1">
    <location>
        <begin position="293"/>
        <end position="646"/>
    </location>
</feature>
<feature type="region of interest" description="Disordered" evidence="3">
    <location>
        <begin position="380"/>
        <end position="407"/>
    </location>
</feature>
<feature type="coiled-coil region" evidence="2">
    <location>
        <begin position="542"/>
        <end position="602"/>
    </location>
</feature>
<feature type="compositionally biased region" description="Basic and acidic residues" evidence="3">
    <location>
        <begin position="396"/>
        <end position="407"/>
    </location>
</feature>
<proteinExistence type="inferred from homology"/>
<reference key="1">
    <citation type="journal article" date="2011" name="Cell">
        <title>Insight into structure and assembly of the nuclear pore complex by utilizing the genome of a eukaryotic thermophile.</title>
        <authorList>
            <person name="Amlacher S."/>
            <person name="Sarges P."/>
            <person name="Flemming D."/>
            <person name="van Noort V."/>
            <person name="Kunze R."/>
            <person name="Devos D.P."/>
            <person name="Arumugam M."/>
            <person name="Bork P."/>
            <person name="Hurt E."/>
        </authorList>
    </citation>
    <scope>NUCLEOTIDE SEQUENCE [LARGE SCALE GENOMIC DNA]</scope>
    <source>
        <strain>DSM 1495 / CBS 144.50 / IMI 039719</strain>
    </source>
</reference>
<accession>G0S235</accession>
<accession>G0ZGV7</accession>
<sequence>MAAAVRRSPYKDFLQPALQRRFATATLVVLATAYFEALLLARWSSWLWSWFPLGPTGFRAALFFLCGIFVIILRISQYHPGIRTSDSPIATLVRYAPRWTTFETLFTYALSAWIFSLVYLGTVPDDAGFERITYFTYDRARLNEKPIFLTTHLVLLGIYQGVRHLYSDIDRLSLGTAQPSNGDSSKATGEDGHVSTQMRRFRDQLPKIVVHSLHQSVMGLLLSASLYPLLLRDLLWRVNMTMLRPLYSLPRTNVPPANLPYSPSTLLRCLAASVMVMFAWTAANTAFSLLLVKSPLKNGKPLTADAKDPNGSLLNGLKNKKLSIKCFAMWELAYIARDFPDRRKAIFEDMDRKDGPMWSQVYKICLDTLHTLSSNIDAYTAPPAPATTPQQAETALGDKPRTSAPPKEDHIFAPLPSNKSAFRTSVSSAFQNAALAGPGGPPASLSPVAKRTLHAARSRLLEAAAPNAEIEVTPSSFFRELALKYVLSSPLAGYPFRQTRRRRLASAVLGSPYGEPSLYVNAASAVSGLAVSSLREDRYGHVQRDVASLIRELTSLGEKLNAFVNEGGMGKHWTDVVELEGEDKCEEVEEVVNAVKHALKRVIVAFEPYARDLRLTRGEVKKAREVAGLEQEVEVREVMPEMVQIR</sequence>
<gene>
    <name type="primary">NDC1</name>
    <name type="ORF">CTHT_0015840</name>
</gene>